<name>DHSC_RICPR</name>
<proteinExistence type="inferred from homology"/>
<accession>P41085</accession>
<dbReference type="EMBL" id="U02603">
    <property type="protein sequence ID" value="AAA18325.1"/>
    <property type="molecule type" value="Unassigned_DNA"/>
</dbReference>
<dbReference type="EMBL" id="AJ235270">
    <property type="protein sequence ID" value="CAA14595.1"/>
    <property type="molecule type" value="Genomic_DNA"/>
</dbReference>
<dbReference type="PIR" id="D71722">
    <property type="entry name" value="D71722"/>
</dbReference>
<dbReference type="RefSeq" id="NP_220518.1">
    <property type="nucleotide sequence ID" value="NC_000963.1"/>
</dbReference>
<dbReference type="RefSeq" id="WP_004597166.1">
    <property type="nucleotide sequence ID" value="NC_000963.1"/>
</dbReference>
<dbReference type="SMR" id="P41085"/>
<dbReference type="STRING" id="272947.gene:17555209"/>
<dbReference type="EnsemblBacteria" id="CAA14595">
    <property type="protein sequence ID" value="CAA14595"/>
    <property type="gene ID" value="CAA14595"/>
</dbReference>
<dbReference type="GeneID" id="57569254"/>
<dbReference type="KEGG" id="rpr:RP126"/>
<dbReference type="PATRIC" id="fig|272947.5.peg.128"/>
<dbReference type="eggNOG" id="COG2009">
    <property type="taxonomic scope" value="Bacteria"/>
</dbReference>
<dbReference type="HOGENOM" id="CLU_094691_3_1_5"/>
<dbReference type="OrthoDB" id="9799441at2"/>
<dbReference type="UniPathway" id="UPA00223"/>
<dbReference type="Proteomes" id="UP000002480">
    <property type="component" value="Chromosome"/>
</dbReference>
<dbReference type="GO" id="GO:0005886">
    <property type="term" value="C:plasma membrane"/>
    <property type="evidence" value="ECO:0007669"/>
    <property type="project" value="UniProtKB-SubCell"/>
</dbReference>
<dbReference type="GO" id="GO:0009055">
    <property type="term" value="F:electron transfer activity"/>
    <property type="evidence" value="ECO:0007669"/>
    <property type="project" value="InterPro"/>
</dbReference>
<dbReference type="GO" id="GO:0046872">
    <property type="term" value="F:metal ion binding"/>
    <property type="evidence" value="ECO:0007669"/>
    <property type="project" value="UniProtKB-KW"/>
</dbReference>
<dbReference type="GO" id="GO:0006099">
    <property type="term" value="P:tricarboxylic acid cycle"/>
    <property type="evidence" value="ECO:0007669"/>
    <property type="project" value="UniProtKB-UniPathway"/>
</dbReference>
<dbReference type="CDD" id="cd03499">
    <property type="entry name" value="SQR_TypeC_SdhC"/>
    <property type="match status" value="1"/>
</dbReference>
<dbReference type="Gene3D" id="1.20.1300.10">
    <property type="entry name" value="Fumarate reductase/succinate dehydrogenase, transmembrane subunit"/>
    <property type="match status" value="1"/>
</dbReference>
<dbReference type="InterPro" id="IPR034804">
    <property type="entry name" value="SQR/QFR_C/D"/>
</dbReference>
<dbReference type="InterPro" id="IPR018495">
    <property type="entry name" value="Succ_DH_cyt_bsu_CS"/>
</dbReference>
<dbReference type="InterPro" id="IPR014314">
    <property type="entry name" value="Succ_DH_cytb556"/>
</dbReference>
<dbReference type="InterPro" id="IPR000701">
    <property type="entry name" value="SuccDH_FuR_B_TM-su"/>
</dbReference>
<dbReference type="NCBIfam" id="TIGR02970">
    <property type="entry name" value="succ_dehyd_cytB"/>
    <property type="match status" value="1"/>
</dbReference>
<dbReference type="PANTHER" id="PTHR10978">
    <property type="entry name" value="SUCCINATE DEHYDROGENASE CYTOCHROME B560 SUBUNIT"/>
    <property type="match status" value="1"/>
</dbReference>
<dbReference type="PANTHER" id="PTHR10978:SF5">
    <property type="entry name" value="SUCCINATE DEHYDROGENASE CYTOCHROME B560 SUBUNIT, MITOCHONDRIAL"/>
    <property type="match status" value="1"/>
</dbReference>
<dbReference type="Pfam" id="PF01127">
    <property type="entry name" value="Sdh_cyt"/>
    <property type="match status" value="1"/>
</dbReference>
<dbReference type="PIRSF" id="PIRSF000178">
    <property type="entry name" value="SDH_cyt_b560"/>
    <property type="match status" value="1"/>
</dbReference>
<dbReference type="SUPFAM" id="SSF81343">
    <property type="entry name" value="Fumarate reductase respiratory complex transmembrane subunits"/>
    <property type="match status" value="1"/>
</dbReference>
<dbReference type="PROSITE" id="PS01000">
    <property type="entry name" value="SDH_CYT_1"/>
    <property type="match status" value="1"/>
</dbReference>
<dbReference type="PROSITE" id="PS01001">
    <property type="entry name" value="SDH_CYT_2"/>
    <property type="match status" value="1"/>
</dbReference>
<organism>
    <name type="scientific">Rickettsia prowazekii (strain Madrid E)</name>
    <dbReference type="NCBI Taxonomy" id="272947"/>
    <lineage>
        <taxon>Bacteria</taxon>
        <taxon>Pseudomonadati</taxon>
        <taxon>Pseudomonadota</taxon>
        <taxon>Alphaproteobacteria</taxon>
        <taxon>Rickettsiales</taxon>
        <taxon>Rickettsiaceae</taxon>
        <taxon>Rickettsieae</taxon>
        <taxon>Rickettsia</taxon>
        <taxon>typhus group</taxon>
    </lineage>
</organism>
<protein>
    <recommendedName>
        <fullName>Succinate dehydrogenase cytochrome b556 subunit</fullName>
        <shortName>Cytochrome b-556</shortName>
    </recommendedName>
</protein>
<keyword id="KW-0997">Cell inner membrane</keyword>
<keyword id="KW-1003">Cell membrane</keyword>
<keyword id="KW-0249">Electron transport</keyword>
<keyword id="KW-0349">Heme</keyword>
<keyword id="KW-0408">Iron</keyword>
<keyword id="KW-0472">Membrane</keyword>
<keyword id="KW-0479">Metal-binding</keyword>
<keyword id="KW-1185">Reference proteome</keyword>
<keyword id="KW-0812">Transmembrane</keyword>
<keyword id="KW-1133">Transmembrane helix</keyword>
<keyword id="KW-0813">Transport</keyword>
<keyword id="KW-0816">Tricarboxylic acid cycle</keyword>
<evidence type="ECO:0000250" key="1"/>
<evidence type="ECO:0000305" key="2"/>
<sequence length="124" mass="14383">MTKIKQEIYNKRPTSPHLTIYKPQISSTLSILHRMTGVALFFVVSILVWWLILSKYDNNYLQLASCCIIKICLVAFSYSWCYHLCNGIRHLFWDIGYGFSIKAVNITGWCVVVCSILLTMLLWV</sequence>
<reference key="1">
    <citation type="submission" date="1993-10" db="EMBL/GenBank/DDBJ databases">
        <authorList>
            <person name="Wood D.O."/>
        </authorList>
    </citation>
    <scope>NUCLEOTIDE SEQUENCE [GENOMIC DNA]</scope>
    <source>
        <strain>Madrid E</strain>
    </source>
</reference>
<reference key="2">
    <citation type="journal article" date="1998" name="Nature">
        <title>The genome sequence of Rickettsia prowazekii and the origin of mitochondria.</title>
        <authorList>
            <person name="Andersson S.G.E."/>
            <person name="Zomorodipour A."/>
            <person name="Andersson J.O."/>
            <person name="Sicheritz-Ponten T."/>
            <person name="Alsmark U.C.M."/>
            <person name="Podowski R.M."/>
            <person name="Naeslund A.K."/>
            <person name="Eriksson A.-S."/>
            <person name="Winkler H.H."/>
            <person name="Kurland C.G."/>
        </authorList>
    </citation>
    <scope>NUCLEOTIDE SEQUENCE [LARGE SCALE GENOMIC DNA]</scope>
    <source>
        <strain>Madrid E</strain>
    </source>
</reference>
<gene>
    <name type="primary">sdhC</name>
    <name type="ordered locus">RP126</name>
</gene>
<feature type="chain" id="PRO_0000203514" description="Succinate dehydrogenase cytochrome b556 subunit">
    <location>
        <begin position="1"/>
        <end position="124"/>
    </location>
</feature>
<feature type="topological domain" description="Cytoplasmic" evidence="1">
    <location>
        <begin position="1"/>
        <end position="29"/>
    </location>
</feature>
<feature type="transmembrane region" description="Helical" evidence="1">
    <location>
        <begin position="30"/>
        <end position="55"/>
    </location>
</feature>
<feature type="topological domain" description="Periplasmic" evidence="1">
    <location>
        <begin position="56"/>
        <end position="67"/>
    </location>
</feature>
<feature type="transmembrane region" description="Helical" evidence="1">
    <location>
        <begin position="68"/>
        <end position="88"/>
    </location>
</feature>
<feature type="topological domain" description="Cytoplasmic" evidence="1">
    <location>
        <begin position="89"/>
        <end position="103"/>
    </location>
</feature>
<feature type="transmembrane region" description="Helical" evidence="1">
    <location>
        <begin position="104"/>
        <end position="124"/>
    </location>
</feature>
<feature type="binding site" description="axial binding residue" evidence="1">
    <location>
        <position position="83"/>
    </location>
    <ligand>
        <name>heme</name>
        <dbReference type="ChEBI" id="CHEBI:30413"/>
        <note>ligand shared with second transmembrane subunit</note>
    </ligand>
    <ligandPart>
        <name>Fe</name>
        <dbReference type="ChEBI" id="CHEBI:18248"/>
    </ligandPart>
</feature>
<comment type="function">
    <text evidence="1">Membrane-anchoring subunit of succinate dehydrogenase (SDH).</text>
</comment>
<comment type="cofactor">
    <cofactor evidence="1">
        <name>heme</name>
        <dbReference type="ChEBI" id="CHEBI:30413"/>
    </cofactor>
    <text evidence="1">The heme is bound between the two transmembrane subunits.</text>
</comment>
<comment type="pathway">
    <text>Carbohydrate metabolism; tricarboxylic acid cycle.</text>
</comment>
<comment type="subunit">
    <text evidence="1">Part of an enzyme complex containing four subunits: a flavoprotein, an iron-sulfur protein, plus two membrane-anchoring proteins, SdhC and SdhD. The complex can form homotrimers (By similarity).</text>
</comment>
<comment type="subcellular location">
    <subcellularLocation>
        <location>Cell inner membrane</location>
        <topology>Multi-pass membrane protein</topology>
    </subcellularLocation>
</comment>
<comment type="similarity">
    <text evidence="2">Belongs to the cytochrome b560 family.</text>
</comment>